<keyword id="KW-0007">Acetylation</keyword>
<keyword id="KW-0903">Direct protein sequencing</keyword>
<keyword id="KW-0349">Heme</keyword>
<keyword id="KW-0408">Iron</keyword>
<keyword id="KW-0479">Metal-binding</keyword>
<keyword id="KW-0561">Oxygen transport</keyword>
<keyword id="KW-0597">Phosphoprotein</keyword>
<keyword id="KW-0702">S-nitrosylation</keyword>
<keyword id="KW-0813">Transport</keyword>
<gene>
    <name type="primary">HBB</name>
</gene>
<dbReference type="PIR" id="A02356">
    <property type="entry name" value="HBMKN"/>
</dbReference>
<dbReference type="SMR" id="P02035"/>
<dbReference type="GO" id="GO:0072562">
    <property type="term" value="C:blood microparticle"/>
    <property type="evidence" value="ECO:0007669"/>
    <property type="project" value="TreeGrafter"/>
</dbReference>
<dbReference type="GO" id="GO:0031838">
    <property type="term" value="C:haptoglobin-hemoglobin complex"/>
    <property type="evidence" value="ECO:0007669"/>
    <property type="project" value="TreeGrafter"/>
</dbReference>
<dbReference type="GO" id="GO:0005833">
    <property type="term" value="C:hemoglobin complex"/>
    <property type="evidence" value="ECO:0007669"/>
    <property type="project" value="InterPro"/>
</dbReference>
<dbReference type="GO" id="GO:0031720">
    <property type="term" value="F:haptoglobin binding"/>
    <property type="evidence" value="ECO:0007669"/>
    <property type="project" value="TreeGrafter"/>
</dbReference>
<dbReference type="GO" id="GO:0020037">
    <property type="term" value="F:heme binding"/>
    <property type="evidence" value="ECO:0007669"/>
    <property type="project" value="InterPro"/>
</dbReference>
<dbReference type="GO" id="GO:0031721">
    <property type="term" value="F:hemoglobin alpha binding"/>
    <property type="evidence" value="ECO:0007669"/>
    <property type="project" value="TreeGrafter"/>
</dbReference>
<dbReference type="GO" id="GO:0046872">
    <property type="term" value="F:metal ion binding"/>
    <property type="evidence" value="ECO:0007669"/>
    <property type="project" value="UniProtKB-KW"/>
</dbReference>
<dbReference type="GO" id="GO:0043177">
    <property type="term" value="F:organic acid binding"/>
    <property type="evidence" value="ECO:0007669"/>
    <property type="project" value="TreeGrafter"/>
</dbReference>
<dbReference type="GO" id="GO:0019825">
    <property type="term" value="F:oxygen binding"/>
    <property type="evidence" value="ECO:0007669"/>
    <property type="project" value="InterPro"/>
</dbReference>
<dbReference type="GO" id="GO:0005344">
    <property type="term" value="F:oxygen carrier activity"/>
    <property type="evidence" value="ECO:0007669"/>
    <property type="project" value="UniProtKB-KW"/>
</dbReference>
<dbReference type="GO" id="GO:0004601">
    <property type="term" value="F:peroxidase activity"/>
    <property type="evidence" value="ECO:0007669"/>
    <property type="project" value="TreeGrafter"/>
</dbReference>
<dbReference type="GO" id="GO:0042744">
    <property type="term" value="P:hydrogen peroxide catabolic process"/>
    <property type="evidence" value="ECO:0007669"/>
    <property type="project" value="TreeGrafter"/>
</dbReference>
<dbReference type="CDD" id="cd08925">
    <property type="entry name" value="Hb-beta-like"/>
    <property type="match status" value="1"/>
</dbReference>
<dbReference type="FunFam" id="1.10.490.10:FF:000001">
    <property type="entry name" value="Hemoglobin subunit beta"/>
    <property type="match status" value="1"/>
</dbReference>
<dbReference type="Gene3D" id="1.10.490.10">
    <property type="entry name" value="Globins"/>
    <property type="match status" value="1"/>
</dbReference>
<dbReference type="InterPro" id="IPR000971">
    <property type="entry name" value="Globin"/>
</dbReference>
<dbReference type="InterPro" id="IPR009050">
    <property type="entry name" value="Globin-like_sf"/>
</dbReference>
<dbReference type="InterPro" id="IPR012292">
    <property type="entry name" value="Globin/Proto"/>
</dbReference>
<dbReference type="InterPro" id="IPR002337">
    <property type="entry name" value="Hemoglobin_b"/>
</dbReference>
<dbReference type="InterPro" id="IPR050056">
    <property type="entry name" value="Hemoglobin_oxygen_transport"/>
</dbReference>
<dbReference type="PANTHER" id="PTHR11442">
    <property type="entry name" value="HEMOGLOBIN FAMILY MEMBER"/>
    <property type="match status" value="1"/>
</dbReference>
<dbReference type="PANTHER" id="PTHR11442:SF42">
    <property type="entry name" value="HEMOGLOBIN SUBUNIT BETA"/>
    <property type="match status" value="1"/>
</dbReference>
<dbReference type="Pfam" id="PF00042">
    <property type="entry name" value="Globin"/>
    <property type="match status" value="1"/>
</dbReference>
<dbReference type="PRINTS" id="PR00814">
    <property type="entry name" value="BETAHAEM"/>
</dbReference>
<dbReference type="SUPFAM" id="SSF46458">
    <property type="entry name" value="Globin-like"/>
    <property type="match status" value="1"/>
</dbReference>
<dbReference type="PROSITE" id="PS01033">
    <property type="entry name" value="GLOBIN"/>
    <property type="match status" value="1"/>
</dbReference>
<comment type="function">
    <text>Involved in oxygen transport from the lung to the various peripheral tissues.</text>
</comment>
<comment type="subunit">
    <text>Heterotetramer of two alpha chains and two beta chains.</text>
</comment>
<comment type="tissue specificity">
    <text>Red blood cells.</text>
</comment>
<comment type="similarity">
    <text evidence="3">Belongs to the globin family.</text>
</comment>
<name>HBB_AOTTR</name>
<proteinExistence type="evidence at protein level"/>
<protein>
    <recommendedName>
        <fullName>Hemoglobin subunit beta</fullName>
    </recommendedName>
    <alternativeName>
        <fullName>Beta-globin</fullName>
    </alternativeName>
    <alternativeName>
        <fullName>Hemoglobin beta chain</fullName>
    </alternativeName>
</protein>
<reference key="1">
    <citation type="journal article" date="1971" name="Biochem. Genet.">
        <title>Primate hemoglobins: some sequences and some proposals concerning the character of evolution and mutation.</title>
        <authorList>
            <person name="Boyer S.H."/>
            <person name="Crosby E.F."/>
            <person name="Noyes A.N."/>
            <person name="Fuller G.F."/>
            <person name="Leslie S.E."/>
            <person name="Donaldson L.J."/>
            <person name="Vrablik G.R."/>
            <person name="Schaefer E.W. Jr."/>
            <person name="Thurmon T.F."/>
        </authorList>
    </citation>
    <scope>PROTEIN SEQUENCE</scope>
</reference>
<feature type="chain" id="PRO_0000052877" description="Hemoglobin subunit beta">
    <location>
        <begin position="1"/>
        <end position="146"/>
    </location>
</feature>
<feature type="domain" description="Globin" evidence="3">
    <location>
        <begin position="2"/>
        <end position="146"/>
    </location>
</feature>
<feature type="binding site" description="distal binding residue">
    <location>
        <position position="63"/>
    </location>
    <ligand>
        <name>heme b</name>
        <dbReference type="ChEBI" id="CHEBI:60344"/>
    </ligand>
    <ligandPart>
        <name>Fe</name>
        <dbReference type="ChEBI" id="CHEBI:18248"/>
    </ligandPart>
</feature>
<feature type="binding site" description="proximal binding residue">
    <location>
        <position position="92"/>
    </location>
    <ligand>
        <name>heme b</name>
        <dbReference type="ChEBI" id="CHEBI:60344"/>
    </ligand>
    <ligandPart>
        <name>Fe</name>
        <dbReference type="ChEBI" id="CHEBI:18248"/>
    </ligandPart>
</feature>
<feature type="modified residue" description="N-acetylvaline" evidence="1">
    <location>
        <position position="1"/>
    </location>
</feature>
<feature type="modified residue" description="Phosphothreonine" evidence="2">
    <location>
        <position position="12"/>
    </location>
</feature>
<feature type="modified residue" description="Phosphoserine" evidence="2">
    <location>
        <position position="44"/>
    </location>
</feature>
<feature type="modified residue" description="N6-acetyllysine" evidence="2">
    <location>
        <position position="59"/>
    </location>
</feature>
<feature type="modified residue" description="N6-acetyllysine" evidence="2">
    <location>
        <position position="82"/>
    </location>
</feature>
<feature type="modified residue" description="S-nitrosocysteine" evidence="2">
    <location>
        <position position="93"/>
    </location>
</feature>
<feature type="modified residue" description="N6-acetyllysine" evidence="2">
    <location>
        <position position="144"/>
    </location>
</feature>
<accession>P02035</accession>
<organism>
    <name type="scientific">Aotus trivirgatus</name>
    <name type="common">Three-striped night monkey</name>
    <name type="synonym">Douroucouli</name>
    <dbReference type="NCBI Taxonomy" id="9505"/>
    <lineage>
        <taxon>Eukaryota</taxon>
        <taxon>Metazoa</taxon>
        <taxon>Chordata</taxon>
        <taxon>Craniata</taxon>
        <taxon>Vertebrata</taxon>
        <taxon>Euteleostomi</taxon>
        <taxon>Mammalia</taxon>
        <taxon>Eutheria</taxon>
        <taxon>Euarchontoglires</taxon>
        <taxon>Primates</taxon>
        <taxon>Haplorrhini</taxon>
        <taxon>Platyrrhini</taxon>
        <taxon>Aotidae</taxon>
        <taxon>Aotus</taxon>
    </lineage>
</organism>
<sequence>VHLTGEEKAAVTALWGKVNVDEVGGEALGRLLVVYPWTQRFFDSFGDLSSPDAVMNNPKVKAHGKKVLGAFSDGLAHLDNLKGTFAQLSELHCDKLHVDPENFRLLGNVLVCVLAHHFGKEFTPQVQAAYQKVVAGVANALAHKYH</sequence>
<evidence type="ECO:0000250" key="1">
    <source>
        <dbReference type="UniProtKB" id="P02086"/>
    </source>
</evidence>
<evidence type="ECO:0000250" key="2">
    <source>
        <dbReference type="UniProtKB" id="P68871"/>
    </source>
</evidence>
<evidence type="ECO:0000255" key="3">
    <source>
        <dbReference type="PROSITE-ProRule" id="PRU00238"/>
    </source>
</evidence>